<dbReference type="EMBL" id="AP008231">
    <property type="protein sequence ID" value="BAD78916.1"/>
    <property type="molecule type" value="Genomic_DNA"/>
</dbReference>
<dbReference type="RefSeq" id="WP_011243038.1">
    <property type="nucleotide sequence ID" value="NZ_CP085785.1"/>
</dbReference>
<dbReference type="SMR" id="Q5N453"/>
<dbReference type="KEGG" id="syc:syc0726_c"/>
<dbReference type="eggNOG" id="COG3705">
    <property type="taxonomic scope" value="Bacteria"/>
</dbReference>
<dbReference type="UniPathway" id="UPA00031">
    <property type="reaction ID" value="UER00006"/>
</dbReference>
<dbReference type="Proteomes" id="UP000001175">
    <property type="component" value="Chromosome"/>
</dbReference>
<dbReference type="GO" id="GO:0005737">
    <property type="term" value="C:cytoplasm"/>
    <property type="evidence" value="ECO:0007669"/>
    <property type="project" value="UniProtKB-SubCell"/>
</dbReference>
<dbReference type="GO" id="GO:0004821">
    <property type="term" value="F:histidine-tRNA ligase activity"/>
    <property type="evidence" value="ECO:0007669"/>
    <property type="project" value="TreeGrafter"/>
</dbReference>
<dbReference type="GO" id="GO:0006427">
    <property type="term" value="P:histidyl-tRNA aminoacylation"/>
    <property type="evidence" value="ECO:0007669"/>
    <property type="project" value="TreeGrafter"/>
</dbReference>
<dbReference type="GO" id="GO:0000105">
    <property type="term" value="P:L-histidine biosynthetic process"/>
    <property type="evidence" value="ECO:0007669"/>
    <property type="project" value="UniProtKB-UniRule"/>
</dbReference>
<dbReference type="CDD" id="cd00773">
    <property type="entry name" value="HisRS-like_core"/>
    <property type="match status" value="1"/>
</dbReference>
<dbReference type="Gene3D" id="3.30.930.10">
    <property type="entry name" value="Bira Bifunctional Protein, Domain 2"/>
    <property type="match status" value="1"/>
</dbReference>
<dbReference type="HAMAP" id="MF_00125">
    <property type="entry name" value="HisZ"/>
    <property type="match status" value="1"/>
</dbReference>
<dbReference type="InterPro" id="IPR006195">
    <property type="entry name" value="aa-tRNA-synth_II"/>
</dbReference>
<dbReference type="InterPro" id="IPR045864">
    <property type="entry name" value="aa-tRNA-synth_II/BPL/LPL"/>
</dbReference>
<dbReference type="InterPro" id="IPR041715">
    <property type="entry name" value="HisRS-like_core"/>
</dbReference>
<dbReference type="InterPro" id="IPR004516">
    <property type="entry name" value="HisRS/HisZ"/>
</dbReference>
<dbReference type="InterPro" id="IPR004517">
    <property type="entry name" value="HisZ"/>
</dbReference>
<dbReference type="NCBIfam" id="TIGR00443">
    <property type="entry name" value="hisZ_biosyn_reg"/>
    <property type="match status" value="1"/>
</dbReference>
<dbReference type="NCBIfam" id="NF008940">
    <property type="entry name" value="PRK12292.2-3"/>
    <property type="match status" value="1"/>
</dbReference>
<dbReference type="PANTHER" id="PTHR43707:SF1">
    <property type="entry name" value="HISTIDINE--TRNA LIGASE, MITOCHONDRIAL-RELATED"/>
    <property type="match status" value="1"/>
</dbReference>
<dbReference type="PANTHER" id="PTHR43707">
    <property type="entry name" value="HISTIDYL-TRNA SYNTHETASE"/>
    <property type="match status" value="1"/>
</dbReference>
<dbReference type="Pfam" id="PF13393">
    <property type="entry name" value="tRNA-synt_His"/>
    <property type="match status" value="1"/>
</dbReference>
<dbReference type="PIRSF" id="PIRSF001549">
    <property type="entry name" value="His-tRNA_synth"/>
    <property type="match status" value="1"/>
</dbReference>
<dbReference type="SUPFAM" id="SSF55681">
    <property type="entry name" value="Class II aaRS and biotin synthetases"/>
    <property type="match status" value="1"/>
</dbReference>
<dbReference type="PROSITE" id="PS50862">
    <property type="entry name" value="AA_TRNA_LIGASE_II"/>
    <property type="match status" value="1"/>
</dbReference>
<keyword id="KW-0028">Amino-acid biosynthesis</keyword>
<keyword id="KW-0963">Cytoplasm</keyword>
<keyword id="KW-0368">Histidine biosynthesis</keyword>
<reference key="1">
    <citation type="journal article" date="2007" name="Photosyn. Res.">
        <title>Complete nucleotide sequence of the freshwater unicellular cyanobacterium Synechococcus elongatus PCC 6301 chromosome: gene content and organization.</title>
        <authorList>
            <person name="Sugita C."/>
            <person name="Ogata K."/>
            <person name="Shikata M."/>
            <person name="Jikuya H."/>
            <person name="Takano J."/>
            <person name="Furumichi M."/>
            <person name="Kanehisa M."/>
            <person name="Omata T."/>
            <person name="Sugiura M."/>
            <person name="Sugita M."/>
        </authorList>
    </citation>
    <scope>NUCLEOTIDE SEQUENCE [LARGE SCALE GENOMIC DNA]</scope>
    <source>
        <strain>ATCC 27144 / PCC 6301 / SAUG 1402/1</strain>
    </source>
</reference>
<gene>
    <name evidence="1" type="primary">hisZ</name>
    <name type="ordered locus">syc0726_c</name>
</gene>
<protein>
    <recommendedName>
        <fullName evidence="1">ATP phosphoribosyltransferase regulatory subunit</fullName>
    </recommendedName>
</protein>
<comment type="function">
    <text evidence="1">Required for the first step of histidine biosynthesis. May allow the feedback regulation of ATP phosphoribosyltransferase activity by histidine.</text>
</comment>
<comment type="pathway">
    <text evidence="1">Amino-acid biosynthesis; L-histidine biosynthesis; L-histidine from 5-phospho-alpha-D-ribose 1-diphosphate: step 1/9.</text>
</comment>
<comment type="subunit">
    <text evidence="1">Heteromultimer composed of HisG and HisZ subunits.</text>
</comment>
<comment type="subcellular location">
    <subcellularLocation>
        <location evidence="1">Cytoplasm</location>
    </subcellularLocation>
</comment>
<comment type="miscellaneous">
    <text>This function is generally fulfilled by the C-terminal part of HisG, which is missing in some bacteria such as this one.</text>
</comment>
<comment type="similarity">
    <text evidence="1">Belongs to the class-II aminoacyl-tRNA synthetase family. HisZ subfamily.</text>
</comment>
<feature type="chain" id="PRO_0000242861" description="ATP phosphoribosyltransferase regulatory subunit">
    <location>
        <begin position="1"/>
        <end position="420"/>
    </location>
</feature>
<accession>Q5N453</accession>
<evidence type="ECO:0000255" key="1">
    <source>
        <dbReference type="HAMAP-Rule" id="MF_00125"/>
    </source>
</evidence>
<organism>
    <name type="scientific">Synechococcus sp. (strain ATCC 27144 / PCC 6301 / SAUG 1402/1)</name>
    <name type="common">Anacystis nidulans</name>
    <dbReference type="NCBI Taxonomy" id="269084"/>
    <lineage>
        <taxon>Bacteria</taxon>
        <taxon>Bacillati</taxon>
        <taxon>Cyanobacteriota</taxon>
        <taxon>Cyanophyceae</taxon>
        <taxon>Synechococcales</taxon>
        <taxon>Synechococcaceae</taxon>
        <taxon>Synechococcus</taxon>
    </lineage>
</organism>
<name>HISZ_SYNP6</name>
<proteinExistence type="inferred from homology"/>
<sequence>MVHQPPAGTRDLLPQDVTQKRWIESRLQQVFQQWGYQRIITPTLERLDTLVAGGAVQRSAVIQVQSDEESGLGLRPELTASIARAAVTRLAGSSLPLRLYYLANVFRPAFQGDRLQQRELFQAGVELLGVGGTLADAEVLHVLADALAELGFGQPPLGSWHLVVGEASLTRSLLQPFPKDLREKVRQAIAQLDRVTLESLPLESQLRDRALLLHDLRGQPDQVFAKLQQLTLTPLEQTLRDRLAQLVELYNASAGPQDSPLLLDLSLLRSFDYYTGIVFEVVYETPTGPWVLAQGGRYDRLLDVYDPQAAGQPGIGFSCNIENLQQVLLAANRLPHRPPAIDQLVIPVDSEAYGAALAEAQRLQRQDQLRVELYLDSDRRPEVVQAFAQRRRIGRIVWVSSGSAPQSEAVAVAERATTTC</sequence>